<reference key="1">
    <citation type="journal article" date="2003" name="Nature">
        <title>Genome divergence in two Prochlorococcus ecotypes reflects oceanic niche differentiation.</title>
        <authorList>
            <person name="Rocap G."/>
            <person name="Larimer F.W."/>
            <person name="Lamerdin J.E."/>
            <person name="Malfatti S."/>
            <person name="Chain P."/>
            <person name="Ahlgren N.A."/>
            <person name="Arellano A."/>
            <person name="Coleman M."/>
            <person name="Hauser L."/>
            <person name="Hess W.R."/>
            <person name="Johnson Z.I."/>
            <person name="Land M.L."/>
            <person name="Lindell D."/>
            <person name="Post A.F."/>
            <person name="Regala W."/>
            <person name="Shah M."/>
            <person name="Shaw S.L."/>
            <person name="Steglich C."/>
            <person name="Sullivan M.B."/>
            <person name="Ting C.S."/>
            <person name="Tolonen A."/>
            <person name="Webb E.A."/>
            <person name="Zinser E.R."/>
            <person name="Chisholm S.W."/>
        </authorList>
    </citation>
    <scope>NUCLEOTIDE SEQUENCE [LARGE SCALE GENOMIC DNA]</scope>
    <source>
        <strain>CCMP1986 / NIES-2087 / MED4</strain>
    </source>
</reference>
<accession>Q7UZK9</accession>
<comment type="function">
    <text evidence="1">Catalyzes the condensation of (S)-aspartate-beta-semialdehyde [(S)-ASA] and pyruvate to 4-hydroxy-tetrahydrodipicolinate (HTPA).</text>
</comment>
<comment type="catalytic activity">
    <reaction evidence="1">
        <text>L-aspartate 4-semialdehyde + pyruvate = (2S,4S)-4-hydroxy-2,3,4,5-tetrahydrodipicolinate + H2O + H(+)</text>
        <dbReference type="Rhea" id="RHEA:34171"/>
        <dbReference type="ChEBI" id="CHEBI:15361"/>
        <dbReference type="ChEBI" id="CHEBI:15377"/>
        <dbReference type="ChEBI" id="CHEBI:15378"/>
        <dbReference type="ChEBI" id="CHEBI:67139"/>
        <dbReference type="ChEBI" id="CHEBI:537519"/>
        <dbReference type="EC" id="4.3.3.7"/>
    </reaction>
</comment>
<comment type="pathway">
    <text evidence="1">Amino-acid biosynthesis; L-lysine biosynthesis via DAP pathway; (S)-tetrahydrodipicolinate from L-aspartate: step 3/4.</text>
</comment>
<comment type="subunit">
    <text evidence="1">Homotetramer; dimer of dimers.</text>
</comment>
<comment type="subcellular location">
    <subcellularLocation>
        <location evidence="1">Cytoplasm</location>
    </subcellularLocation>
</comment>
<comment type="similarity">
    <text evidence="1">Belongs to the DapA family.</text>
</comment>
<comment type="caution">
    <text evidence="2">Was originally thought to be a dihydrodipicolinate synthase (DHDPS), catalyzing the condensation of (S)-aspartate-beta-semialdehyde [(S)-ASA] and pyruvate to dihydrodipicolinate (DHDP). However, it was shown in E.coli that the product of the enzymatic reaction is not dihydrodipicolinate but in fact (4S)-4-hydroxy-2,3,4,5-tetrahydro-(2S)-dipicolinic acid (HTPA), and that the consecutive dehydration reaction leading to DHDP is not spontaneous but catalyzed by DapB.</text>
</comment>
<name>DAPA_PROMP</name>
<proteinExistence type="inferred from homology"/>
<dbReference type="EC" id="4.3.3.7" evidence="1"/>
<dbReference type="EMBL" id="BX548174">
    <property type="protein sequence ID" value="CAE20112.1"/>
    <property type="molecule type" value="Genomic_DNA"/>
</dbReference>
<dbReference type="RefSeq" id="WP_011133280.1">
    <property type="nucleotide sequence ID" value="NC_005072.1"/>
</dbReference>
<dbReference type="SMR" id="Q7UZK9"/>
<dbReference type="STRING" id="59919.PMM1653"/>
<dbReference type="KEGG" id="pmm:PMM1653"/>
<dbReference type="eggNOG" id="COG0329">
    <property type="taxonomic scope" value="Bacteria"/>
</dbReference>
<dbReference type="HOGENOM" id="CLU_049343_7_1_3"/>
<dbReference type="OrthoDB" id="9782828at2"/>
<dbReference type="UniPathway" id="UPA00034">
    <property type="reaction ID" value="UER00017"/>
</dbReference>
<dbReference type="Proteomes" id="UP000001026">
    <property type="component" value="Chromosome"/>
</dbReference>
<dbReference type="GO" id="GO:0005829">
    <property type="term" value="C:cytosol"/>
    <property type="evidence" value="ECO:0007669"/>
    <property type="project" value="TreeGrafter"/>
</dbReference>
<dbReference type="GO" id="GO:0008840">
    <property type="term" value="F:4-hydroxy-tetrahydrodipicolinate synthase activity"/>
    <property type="evidence" value="ECO:0007669"/>
    <property type="project" value="UniProtKB-UniRule"/>
</dbReference>
<dbReference type="GO" id="GO:0019877">
    <property type="term" value="P:diaminopimelate biosynthetic process"/>
    <property type="evidence" value="ECO:0007669"/>
    <property type="project" value="UniProtKB-UniRule"/>
</dbReference>
<dbReference type="GO" id="GO:0009089">
    <property type="term" value="P:lysine biosynthetic process via diaminopimelate"/>
    <property type="evidence" value="ECO:0007669"/>
    <property type="project" value="UniProtKB-UniRule"/>
</dbReference>
<dbReference type="CDD" id="cd00950">
    <property type="entry name" value="DHDPS"/>
    <property type="match status" value="1"/>
</dbReference>
<dbReference type="Gene3D" id="3.20.20.70">
    <property type="entry name" value="Aldolase class I"/>
    <property type="match status" value="1"/>
</dbReference>
<dbReference type="HAMAP" id="MF_00418">
    <property type="entry name" value="DapA"/>
    <property type="match status" value="1"/>
</dbReference>
<dbReference type="InterPro" id="IPR013785">
    <property type="entry name" value="Aldolase_TIM"/>
</dbReference>
<dbReference type="InterPro" id="IPR005263">
    <property type="entry name" value="DapA"/>
</dbReference>
<dbReference type="InterPro" id="IPR002220">
    <property type="entry name" value="DapA-like"/>
</dbReference>
<dbReference type="InterPro" id="IPR020625">
    <property type="entry name" value="Schiff_base-form_aldolases_AS"/>
</dbReference>
<dbReference type="InterPro" id="IPR020624">
    <property type="entry name" value="Schiff_base-form_aldolases_CS"/>
</dbReference>
<dbReference type="NCBIfam" id="TIGR00674">
    <property type="entry name" value="dapA"/>
    <property type="match status" value="1"/>
</dbReference>
<dbReference type="PANTHER" id="PTHR12128:SF66">
    <property type="entry name" value="4-HYDROXY-2-OXOGLUTARATE ALDOLASE, MITOCHONDRIAL"/>
    <property type="match status" value="1"/>
</dbReference>
<dbReference type="PANTHER" id="PTHR12128">
    <property type="entry name" value="DIHYDRODIPICOLINATE SYNTHASE"/>
    <property type="match status" value="1"/>
</dbReference>
<dbReference type="Pfam" id="PF00701">
    <property type="entry name" value="DHDPS"/>
    <property type="match status" value="1"/>
</dbReference>
<dbReference type="PIRSF" id="PIRSF001365">
    <property type="entry name" value="DHDPS"/>
    <property type="match status" value="1"/>
</dbReference>
<dbReference type="PRINTS" id="PR00146">
    <property type="entry name" value="DHPICSNTHASE"/>
</dbReference>
<dbReference type="SMART" id="SM01130">
    <property type="entry name" value="DHDPS"/>
    <property type="match status" value="1"/>
</dbReference>
<dbReference type="SUPFAM" id="SSF51569">
    <property type="entry name" value="Aldolase"/>
    <property type="match status" value="1"/>
</dbReference>
<dbReference type="PROSITE" id="PS00665">
    <property type="entry name" value="DHDPS_1"/>
    <property type="match status" value="1"/>
</dbReference>
<dbReference type="PROSITE" id="PS00666">
    <property type="entry name" value="DHDPS_2"/>
    <property type="match status" value="1"/>
</dbReference>
<evidence type="ECO:0000255" key="1">
    <source>
        <dbReference type="HAMAP-Rule" id="MF_00418"/>
    </source>
</evidence>
<evidence type="ECO:0000305" key="2"/>
<protein>
    <recommendedName>
        <fullName evidence="1">4-hydroxy-tetrahydrodipicolinate synthase</fullName>
        <shortName evidence="1">HTPA synthase</shortName>
        <ecNumber evidence="1">4.3.3.7</ecNumber>
    </recommendedName>
</protein>
<sequence length="302" mass="32607">MIPNNTKFSNPLFGRILTAMVTPFKKNGAVDYELAIKLSNYLCENGSDGIVLCGTTGESPTLTWAEQHNLFVAVKGSLNSRSKVIVGTGSNCTSEAIEATQKAYEFGADGALVVVPYYNKPPQEGLYKHFSSIANAASDLPLMLYNIPGRTGCNLLPTTVNKLMNFPNILSIKAASGRIEEVTELRAACGSKLSIYSGDDSLLLPMLSVGAVGVVSVASHIVGLQLKTMIESFQKGEISIALDIHEKLQPLFKALFETTNPIPIKAALELRGWQVGSPRNPLTPLIKEKRESLLQIIQNLSL</sequence>
<gene>
    <name evidence="1" type="primary">dapA</name>
    <name type="ordered locus">PMM1653</name>
</gene>
<feature type="chain" id="PRO_0000103137" description="4-hydroxy-tetrahydrodipicolinate synthase">
    <location>
        <begin position="1"/>
        <end position="302"/>
    </location>
</feature>
<feature type="active site" description="Proton donor/acceptor" evidence="1">
    <location>
        <position position="145"/>
    </location>
</feature>
<feature type="active site" description="Schiff-base intermediate with substrate" evidence="1">
    <location>
        <position position="173"/>
    </location>
</feature>
<feature type="binding site" evidence="1">
    <location>
        <position position="56"/>
    </location>
    <ligand>
        <name>pyruvate</name>
        <dbReference type="ChEBI" id="CHEBI:15361"/>
    </ligand>
</feature>
<feature type="binding site" evidence="1">
    <location>
        <position position="215"/>
    </location>
    <ligand>
        <name>pyruvate</name>
        <dbReference type="ChEBI" id="CHEBI:15361"/>
    </ligand>
</feature>
<feature type="site" description="Part of a proton relay during catalysis" evidence="1">
    <location>
        <position position="55"/>
    </location>
</feature>
<feature type="site" description="Part of a proton relay during catalysis" evidence="1">
    <location>
        <position position="118"/>
    </location>
</feature>
<organism>
    <name type="scientific">Prochlorococcus marinus subsp. pastoris (strain CCMP1986 / NIES-2087 / MED4)</name>
    <dbReference type="NCBI Taxonomy" id="59919"/>
    <lineage>
        <taxon>Bacteria</taxon>
        <taxon>Bacillati</taxon>
        <taxon>Cyanobacteriota</taxon>
        <taxon>Cyanophyceae</taxon>
        <taxon>Synechococcales</taxon>
        <taxon>Prochlorococcaceae</taxon>
        <taxon>Prochlorococcus</taxon>
    </lineage>
</organism>
<keyword id="KW-0028">Amino-acid biosynthesis</keyword>
<keyword id="KW-0963">Cytoplasm</keyword>
<keyword id="KW-0220">Diaminopimelate biosynthesis</keyword>
<keyword id="KW-0456">Lyase</keyword>
<keyword id="KW-0457">Lysine biosynthesis</keyword>
<keyword id="KW-0704">Schiff base</keyword>